<evidence type="ECO:0000250" key="1"/>
<evidence type="ECO:0000255" key="2"/>
<evidence type="ECO:0000269" key="3">
    <source>
    </source>
</evidence>
<evidence type="ECO:0000269" key="4">
    <source>
    </source>
</evidence>
<evidence type="ECO:0000269" key="5">
    <source>
    </source>
</evidence>
<evidence type="ECO:0000269" key="6">
    <source>
    </source>
</evidence>
<evidence type="ECO:0000269" key="7">
    <source>
    </source>
</evidence>
<evidence type="ECO:0000269" key="8">
    <source>
    </source>
</evidence>
<evidence type="ECO:0000305" key="9"/>
<sequence>MLKTYQKLLAMGIFLIVLCSGNAAFAATNQVGGLSNVGFFHDYLIEPFSALLKGVAGLFHGEYGLSIILVTIIVRIVVLPLFVNQFKKQRIFQEKMAVIKPQVDSIQVKLKKTKDPEKQKELQMEMMKLYQEHNINPLAMGCLPMLIQSPIMIGLYYAIRSTPEIASHSFLWFSLGQSDILMSLSAGIMYFVQAYIAQKLSAKYSAVPQNPAAQQSAKLMVFIFPVMMTIFSLNVPAALPLYWFTSGLFLTVQNIVLQMTHHKSKKTAALTESVK</sequence>
<keyword id="KW-1003">Cell membrane</keyword>
<keyword id="KW-0143">Chaperone</keyword>
<keyword id="KW-0449">Lipoprotein</keyword>
<keyword id="KW-0472">Membrane</keyword>
<keyword id="KW-0564">Palmitate</keyword>
<keyword id="KW-0653">Protein transport</keyword>
<keyword id="KW-1185">Reference proteome</keyword>
<keyword id="KW-0732">Signal</keyword>
<keyword id="KW-0812">Transmembrane</keyword>
<keyword id="KW-1133">Transmembrane helix</keyword>
<keyword id="KW-0813">Transport</keyword>
<name>MISCB_BACSU</name>
<proteinExistence type="evidence at protein level"/>
<gene>
    <name type="primary">misCB</name>
    <name type="synonym">yqjG</name>
    <name type="ordered locus">BSU23890</name>
</gene>
<protein>
    <recommendedName>
        <fullName>Membrane protein insertase MisCB</fullName>
    </recommendedName>
    <alternativeName>
        <fullName>Foldase YidC 1</fullName>
    </alternativeName>
    <alternativeName>
        <fullName>Membrane integrase YidC 1</fullName>
    </alternativeName>
    <alternativeName>
        <fullName>Membrane protein YidC 1</fullName>
    </alternativeName>
</protein>
<organism>
    <name type="scientific">Bacillus subtilis (strain 168)</name>
    <dbReference type="NCBI Taxonomy" id="224308"/>
    <lineage>
        <taxon>Bacteria</taxon>
        <taxon>Bacillati</taxon>
        <taxon>Bacillota</taxon>
        <taxon>Bacilli</taxon>
        <taxon>Bacillales</taxon>
        <taxon>Bacillaceae</taxon>
        <taxon>Bacillus</taxon>
    </lineage>
</organism>
<dbReference type="EMBL" id="D84432">
    <property type="protein sequence ID" value="BAA12613.1"/>
    <property type="molecule type" value="Genomic_DNA"/>
</dbReference>
<dbReference type="EMBL" id="AL009126">
    <property type="protein sequence ID" value="CAB14320.1"/>
    <property type="molecule type" value="Genomic_DNA"/>
</dbReference>
<dbReference type="PIR" id="G69963">
    <property type="entry name" value="G69963"/>
</dbReference>
<dbReference type="RefSeq" id="WP_003230359.1">
    <property type="nucleotide sequence ID" value="NZ_OZ025638.1"/>
</dbReference>
<dbReference type="SMR" id="P54544"/>
<dbReference type="FunCoup" id="P54544">
    <property type="interactions" value="405"/>
</dbReference>
<dbReference type="IntAct" id="P54544">
    <property type="interactions" value="10"/>
</dbReference>
<dbReference type="STRING" id="224308.BSU23890"/>
<dbReference type="TCDB" id="2.A.9.3.3">
    <property type="family name" value="the membrane protein insertase (yidc/alb3/oxa1) family"/>
</dbReference>
<dbReference type="PaxDb" id="224308-BSU23890"/>
<dbReference type="DNASU" id="938692"/>
<dbReference type="EnsemblBacteria" id="CAB14320">
    <property type="protein sequence ID" value="CAB14320"/>
    <property type="gene ID" value="BSU_23890"/>
</dbReference>
<dbReference type="GeneID" id="938692"/>
<dbReference type="KEGG" id="bsu:BSU23890"/>
<dbReference type="PATRIC" id="fig|224308.179.peg.2602"/>
<dbReference type="eggNOG" id="COG0706">
    <property type="taxonomic scope" value="Bacteria"/>
</dbReference>
<dbReference type="InParanoid" id="P54544"/>
<dbReference type="OrthoDB" id="9780552at2"/>
<dbReference type="PhylomeDB" id="P54544"/>
<dbReference type="BioCyc" id="BSUB:BSU23890-MONOMER"/>
<dbReference type="Proteomes" id="UP000001570">
    <property type="component" value="Chromosome"/>
</dbReference>
<dbReference type="GO" id="GO:0005886">
    <property type="term" value="C:plasma membrane"/>
    <property type="evidence" value="ECO:0000318"/>
    <property type="project" value="GO_Central"/>
</dbReference>
<dbReference type="GO" id="GO:0032977">
    <property type="term" value="F:membrane insertase activity"/>
    <property type="evidence" value="ECO:0000318"/>
    <property type="project" value="GO_Central"/>
</dbReference>
<dbReference type="GO" id="GO:0051205">
    <property type="term" value="P:protein insertion into membrane"/>
    <property type="evidence" value="ECO:0000318"/>
    <property type="project" value="GO_Central"/>
</dbReference>
<dbReference type="GO" id="GO:0015031">
    <property type="term" value="P:protein transport"/>
    <property type="evidence" value="ECO:0007669"/>
    <property type="project" value="UniProtKB-KW"/>
</dbReference>
<dbReference type="CDD" id="cd20070">
    <property type="entry name" value="5TM_YidC_Alb3"/>
    <property type="match status" value="1"/>
</dbReference>
<dbReference type="HAMAP" id="MF_01811">
    <property type="entry name" value="YidC_type2"/>
    <property type="match status" value="1"/>
</dbReference>
<dbReference type="InterPro" id="IPR001708">
    <property type="entry name" value="YidC/ALB3/OXA1/COX18"/>
</dbReference>
<dbReference type="InterPro" id="IPR028055">
    <property type="entry name" value="YidC/Oxa/ALB_C"/>
</dbReference>
<dbReference type="InterPro" id="IPR023060">
    <property type="entry name" value="YidC/YidC1/YidC2_Firmicutes"/>
</dbReference>
<dbReference type="InterPro" id="IPR047196">
    <property type="entry name" value="YidC_ALB_C"/>
</dbReference>
<dbReference type="NCBIfam" id="TIGR03592">
    <property type="entry name" value="yidC_oxa1_cterm"/>
    <property type="match status" value="1"/>
</dbReference>
<dbReference type="PANTHER" id="PTHR12428:SF65">
    <property type="entry name" value="CYTOCHROME C OXIDASE ASSEMBLY PROTEIN COX18, MITOCHONDRIAL"/>
    <property type="match status" value="1"/>
</dbReference>
<dbReference type="PANTHER" id="PTHR12428">
    <property type="entry name" value="OXA1"/>
    <property type="match status" value="1"/>
</dbReference>
<dbReference type="Pfam" id="PF02096">
    <property type="entry name" value="60KD_IMP"/>
    <property type="match status" value="1"/>
</dbReference>
<comment type="function">
    <text evidence="1 3 4 8">Required for the insertion and/or proper folding and/or complex formation of integral membrane proteins into the membrane. Involved in integration of membrane proteins that insert both dependently and independently of the Sec translocase complex, as well as at least some lipoproteins (By similarity). Also involved in protein secretion processes. It has an overlapping, although partly distinct, function compared to SpoIIIJ(MisCB).</text>
</comment>
<comment type="subunit">
    <text evidence="6 7">Mostly monomeric, it may also form dimers. Interacts with SpoIIIAE. Forms a complex with the F(1)F(0) ATP synthase in which can be found the alpha, beta, gamma, delta and epsilon subunits of F(1) and a, b and subunits of F(0). YqgA is found in the same complex.</text>
</comment>
<comment type="subcellular location">
    <subcellularLocation>
        <location evidence="3 5">Cell membrane</location>
        <topology evidence="3 5">Multi-pass membrane protein</topology>
    </subcellularLocation>
    <text>Found uniformly distributed in both the mother cell and forespore following sporulation.</text>
</comment>
<comment type="developmental stage">
    <text evidence="3 4">Predominantly expressed in vegetative cells.</text>
</comment>
<comment type="disruption phenotype">
    <text evidence="3 4 8">Disruption decreases genetic competence by about 50%, significant loss of expression of ComGC, no effect on sporulation. A double spoIIIJ-yqjG deletion is lethal.</text>
</comment>
<comment type="similarity">
    <text evidence="9">Belongs to the OXA1/ALB3/YidC family. Type 2 subfamily.</text>
</comment>
<accession>P54544</accession>
<feature type="signal peptide" evidence="2">
    <location>
        <begin position="1"/>
        <end position="18"/>
    </location>
</feature>
<feature type="chain" id="PRO_0000020379" description="Membrane protein insertase MisCB">
    <location>
        <begin position="19"/>
        <end position="275"/>
    </location>
</feature>
<feature type="transmembrane region" description="Helical" evidence="2">
    <location>
        <begin position="63"/>
        <end position="83"/>
    </location>
</feature>
<feature type="transmembrane region" description="Helical" evidence="2">
    <location>
        <begin position="139"/>
        <end position="159"/>
    </location>
</feature>
<feature type="transmembrane region" description="Helical" evidence="2">
    <location>
        <begin position="172"/>
        <end position="192"/>
    </location>
</feature>
<feature type="transmembrane region" description="Helical" evidence="2">
    <location>
        <begin position="219"/>
        <end position="239"/>
    </location>
</feature>
<feature type="transmembrane region" description="Helical" evidence="2">
    <location>
        <begin position="240"/>
        <end position="260"/>
    </location>
</feature>
<feature type="lipid moiety-binding region" description="N-palmitoyl cysteine" evidence="2">
    <location>
        <position position="19"/>
    </location>
</feature>
<feature type="lipid moiety-binding region" description="S-diacylglycerol cysteine" evidence="2">
    <location>
        <position position="19"/>
    </location>
</feature>
<reference key="1">
    <citation type="journal article" date="1996" name="Microbiology">
        <title>Systematic sequencing of the 283 kb 210 degrees-232 degrees region of the Bacillus subtilis genome containing the skin element and many sporulation genes.</title>
        <authorList>
            <person name="Mizuno M."/>
            <person name="Masuda S."/>
            <person name="Takemaru K."/>
            <person name="Hosono S."/>
            <person name="Sato T."/>
            <person name="Takeuchi M."/>
            <person name="Kobayashi Y."/>
        </authorList>
    </citation>
    <scope>NUCLEOTIDE SEQUENCE [GENOMIC DNA]</scope>
    <source>
        <strain>168 / JH642</strain>
    </source>
</reference>
<reference key="2">
    <citation type="journal article" date="1997" name="Nature">
        <title>The complete genome sequence of the Gram-positive bacterium Bacillus subtilis.</title>
        <authorList>
            <person name="Kunst F."/>
            <person name="Ogasawara N."/>
            <person name="Moszer I."/>
            <person name="Albertini A.M."/>
            <person name="Alloni G."/>
            <person name="Azevedo V."/>
            <person name="Bertero M.G."/>
            <person name="Bessieres P."/>
            <person name="Bolotin A."/>
            <person name="Borchert S."/>
            <person name="Borriss R."/>
            <person name="Boursier L."/>
            <person name="Brans A."/>
            <person name="Braun M."/>
            <person name="Brignell S.C."/>
            <person name="Bron S."/>
            <person name="Brouillet S."/>
            <person name="Bruschi C.V."/>
            <person name="Caldwell B."/>
            <person name="Capuano V."/>
            <person name="Carter N.M."/>
            <person name="Choi S.-K."/>
            <person name="Codani J.-J."/>
            <person name="Connerton I.F."/>
            <person name="Cummings N.J."/>
            <person name="Daniel R.A."/>
            <person name="Denizot F."/>
            <person name="Devine K.M."/>
            <person name="Duesterhoeft A."/>
            <person name="Ehrlich S.D."/>
            <person name="Emmerson P.T."/>
            <person name="Entian K.-D."/>
            <person name="Errington J."/>
            <person name="Fabret C."/>
            <person name="Ferrari E."/>
            <person name="Foulger D."/>
            <person name="Fritz C."/>
            <person name="Fujita M."/>
            <person name="Fujita Y."/>
            <person name="Fuma S."/>
            <person name="Galizzi A."/>
            <person name="Galleron N."/>
            <person name="Ghim S.-Y."/>
            <person name="Glaser P."/>
            <person name="Goffeau A."/>
            <person name="Golightly E.J."/>
            <person name="Grandi G."/>
            <person name="Guiseppi G."/>
            <person name="Guy B.J."/>
            <person name="Haga K."/>
            <person name="Haiech J."/>
            <person name="Harwood C.R."/>
            <person name="Henaut A."/>
            <person name="Hilbert H."/>
            <person name="Holsappel S."/>
            <person name="Hosono S."/>
            <person name="Hullo M.-F."/>
            <person name="Itaya M."/>
            <person name="Jones L.-M."/>
            <person name="Joris B."/>
            <person name="Karamata D."/>
            <person name="Kasahara Y."/>
            <person name="Klaerr-Blanchard M."/>
            <person name="Klein C."/>
            <person name="Kobayashi Y."/>
            <person name="Koetter P."/>
            <person name="Koningstein G."/>
            <person name="Krogh S."/>
            <person name="Kumano M."/>
            <person name="Kurita K."/>
            <person name="Lapidus A."/>
            <person name="Lardinois S."/>
            <person name="Lauber J."/>
            <person name="Lazarevic V."/>
            <person name="Lee S.-M."/>
            <person name="Levine A."/>
            <person name="Liu H."/>
            <person name="Masuda S."/>
            <person name="Mauel C."/>
            <person name="Medigue C."/>
            <person name="Medina N."/>
            <person name="Mellado R.P."/>
            <person name="Mizuno M."/>
            <person name="Moestl D."/>
            <person name="Nakai S."/>
            <person name="Noback M."/>
            <person name="Noone D."/>
            <person name="O'Reilly M."/>
            <person name="Ogawa K."/>
            <person name="Ogiwara A."/>
            <person name="Oudega B."/>
            <person name="Park S.-H."/>
            <person name="Parro V."/>
            <person name="Pohl T.M."/>
            <person name="Portetelle D."/>
            <person name="Porwollik S."/>
            <person name="Prescott A.M."/>
            <person name="Presecan E."/>
            <person name="Pujic P."/>
            <person name="Purnelle B."/>
            <person name="Rapoport G."/>
            <person name="Rey M."/>
            <person name="Reynolds S."/>
            <person name="Rieger M."/>
            <person name="Rivolta C."/>
            <person name="Rocha E."/>
            <person name="Roche B."/>
            <person name="Rose M."/>
            <person name="Sadaie Y."/>
            <person name="Sato T."/>
            <person name="Scanlan E."/>
            <person name="Schleich S."/>
            <person name="Schroeter R."/>
            <person name="Scoffone F."/>
            <person name="Sekiguchi J."/>
            <person name="Sekowska A."/>
            <person name="Seror S.J."/>
            <person name="Serror P."/>
            <person name="Shin B.-S."/>
            <person name="Soldo B."/>
            <person name="Sorokin A."/>
            <person name="Tacconi E."/>
            <person name="Takagi T."/>
            <person name="Takahashi H."/>
            <person name="Takemaru K."/>
            <person name="Takeuchi M."/>
            <person name="Tamakoshi A."/>
            <person name="Tanaka T."/>
            <person name="Terpstra P."/>
            <person name="Tognoni A."/>
            <person name="Tosato V."/>
            <person name="Uchiyama S."/>
            <person name="Vandenbol M."/>
            <person name="Vannier F."/>
            <person name="Vassarotti A."/>
            <person name="Viari A."/>
            <person name="Wambutt R."/>
            <person name="Wedler E."/>
            <person name="Wedler H."/>
            <person name="Weitzenegger T."/>
            <person name="Winters P."/>
            <person name="Wipat A."/>
            <person name="Yamamoto H."/>
            <person name="Yamane K."/>
            <person name="Yasumoto K."/>
            <person name="Yata K."/>
            <person name="Yoshida K."/>
            <person name="Yoshikawa H.-F."/>
            <person name="Zumstein E."/>
            <person name="Yoshikawa H."/>
            <person name="Danchin A."/>
        </authorList>
    </citation>
    <scope>NUCLEOTIDE SEQUENCE [LARGE SCALE GENOMIC DNA]</scope>
    <source>
        <strain>168</strain>
    </source>
</reference>
<reference key="3">
    <citation type="journal article" date="2002" name="J. Bacteriol.">
        <title>Analysis of the Bacillus subtilis spoIIIJ gene and its paralogue gene, yqjG.</title>
        <authorList>
            <person name="Murakami T."/>
            <person name="Haga K."/>
            <person name="Takeuchi M."/>
            <person name="Sato T."/>
        </authorList>
    </citation>
    <scope>FUNCTION</scope>
    <scope>SUBCELLULAR LOCATION</scope>
    <scope>DEVELOPMENTAL STAGE</scope>
    <scope>DISRUPTION PHENOTYPE</scope>
    <source>
        <strain>168</strain>
    </source>
</reference>
<reference key="4">
    <citation type="journal article" date="2003" name="J. Biol. Chem.">
        <title>Complementary impact of paralogous Oxa1-like proteins of Bacillus subtilis on post-translocational stages in protein secretion.</title>
        <authorList>
            <person name="Tjalsma H."/>
            <person name="Bron S."/>
            <person name="van Dijl J.M."/>
        </authorList>
    </citation>
    <scope>FUNCTION</scope>
    <scope>DEVELOPMENTAL STAGE</scope>
    <scope>DISRUPTION PHENOTYPE</scope>
    <source>
        <strain>168</strain>
    </source>
</reference>
<reference key="5">
    <citation type="journal article" date="2005" name="J. Bacteriol.">
        <title>Localization of translocation complex components in Bacillus subtilis: enrichment of the signal recognition particle receptor at early sporulation septa.</title>
        <authorList>
            <person name="Rubio A."/>
            <person name="Jiang X."/>
            <person name="Pogliano K."/>
        </authorList>
    </citation>
    <scope>SUBCELLULAR LOCATION</scope>
    <source>
        <strain>168 / PY79</strain>
    </source>
</reference>
<reference key="6">
    <citation type="journal article" date="2008" name="J. Bacteriol.">
        <title>Processing of a membrane protein required for cell-to-cell signaling during endospore formation in Bacillus subtilis.</title>
        <authorList>
            <person name="Serrano M."/>
            <person name="Vieira F."/>
            <person name="Moran C.P. Jr."/>
            <person name="Henriques A.O."/>
        </authorList>
    </citation>
    <scope>INTERACTION WITH SPOIIIAE</scope>
    <scope>SUBUNIT</scope>
    <source>
        <strain>168 / MB24</strain>
    </source>
</reference>
<reference key="7">
    <citation type="journal article" date="2009" name="J. Bacteriol.">
        <title>Bacillus subtilis SpoIIIJ and YqjG function in membrane protein biogenesis.</title>
        <authorList>
            <person name="Saller M.J."/>
            <person name="Fusetti F."/>
            <person name="Driessen A.J."/>
        </authorList>
    </citation>
    <scope>INTERACTION WITH F(1)F(0) ATP SYNTHASE COMPLEX AND YQGA</scope>
    <scope>COMPLEMENTS E.COLI</scope>
    <source>
        <strain>168</strain>
    </source>
</reference>
<reference key="8">
    <citation type="journal article" date="2011" name="Proteomics">
        <title>Bacillus subtilis YqjG is required for genetic competence development.</title>
        <authorList>
            <person name="Saller M.J."/>
            <person name="Otto A."/>
            <person name="Berrelkamp-Lahpor G.A."/>
            <person name="Becher D."/>
            <person name="Hecker M."/>
            <person name="Driessen A.J."/>
        </authorList>
    </citation>
    <scope>FUNCTION IN GENETIC COMPETENCE DEVELOPMENT</scope>
    <scope>DISRUPTION PHENOTYPE</scope>
    <source>
        <strain>168</strain>
    </source>
</reference>